<protein>
    <recommendedName>
        <fullName>SH3 domain-binding protein 4</fullName>
    </recommendedName>
</protein>
<organism>
    <name type="scientific">Rattus norvegicus</name>
    <name type="common">Rat</name>
    <dbReference type="NCBI Taxonomy" id="10116"/>
    <lineage>
        <taxon>Eukaryota</taxon>
        <taxon>Metazoa</taxon>
        <taxon>Chordata</taxon>
        <taxon>Craniata</taxon>
        <taxon>Vertebrata</taxon>
        <taxon>Euteleostomi</taxon>
        <taxon>Mammalia</taxon>
        <taxon>Eutheria</taxon>
        <taxon>Euarchontoglires</taxon>
        <taxon>Glires</taxon>
        <taxon>Rodentia</taxon>
        <taxon>Myomorpha</taxon>
        <taxon>Muroidea</taxon>
        <taxon>Muridae</taxon>
        <taxon>Murinae</taxon>
        <taxon>Rattus</taxon>
    </lineage>
</organism>
<keyword id="KW-0168">Coated pit</keyword>
<keyword id="KW-0968">Cytoplasmic vesicle</keyword>
<keyword id="KW-0254">Endocytosis</keyword>
<keyword id="KW-0472">Membrane</keyword>
<keyword id="KW-0539">Nucleus</keyword>
<keyword id="KW-0597">Phosphoprotein</keyword>
<keyword id="KW-1185">Reference proteome</keyword>
<keyword id="KW-0677">Repeat</keyword>
<keyword id="KW-0728">SH3 domain</keyword>
<comment type="function">
    <text evidence="1">May function in transferrin receptor internalization at the plasma membrane through a cargo-specific control of clathrin-mediated endocytosis. Alternatively, may act as a negative regulator of the amino acid-induced TOR signaling by inhibiting the formation of active Rag GTPase complexes. Preferentially binds inactive Rag GTPase complexes and prevents their interaction with the mTORC1 complex inhibiting its relocalization to lysosomes and its activation. Thereby, may indirectly regulate cell growth, proliferation and autophagy (By similarity).</text>
</comment>
<comment type="subunit">
    <text evidence="1">Homodimer or homooligomer. Interacts with DNM2, EPS15, clathrin, the adapter protein complex 2/AP-2 and TFRC. Interacts with the Rag GTPases RRAGA, RRAGB, RRAGC and RRAGD; the interaction is most probably direct, preferentially occurs with their inactive GDP-bound form and is negatively regulated by amino acids (By similarity).</text>
</comment>
<comment type="subcellular location">
    <subcellularLocation>
        <location evidence="1">Membrane</location>
        <location evidence="1">Clathrin-coated pit</location>
    </subcellularLocation>
    <subcellularLocation>
        <location evidence="1">Cytoplasmic vesicle</location>
        <location evidence="1">Clathrin-coated vesicle</location>
    </subcellularLocation>
    <subcellularLocation>
        <location evidence="1">Nucleus</location>
    </subcellularLocation>
    <text evidence="1">Specifically associated with transferrin receptor-containing clathrin-coated pits and clathrin-coated vesicles. May also localize to the nucleus (By similarity).</text>
</comment>
<comment type="domain">
    <text evidence="1">The SH3 domain mediates localization to the clathrin-coated pits and vesicles. The SH3 domain mediates interaction with DNM2 and the cytoplasmic part of TFRC with a lower affinity. The SH3 domain also mediates interaction with RRAGB, RRAGC and is required for the negative regulation of mTORC1 (By similarity).</text>
</comment>
<comment type="PTM">
    <text evidence="1">Phosphorylated upon EGF stimulation. Phosphorylation prevents interaction with DNM2 (By similarity).</text>
</comment>
<proteinExistence type="evidence at protein level"/>
<name>SH3B4_RAT</name>
<reference key="1">
    <citation type="submission" date="2003-09" db="EMBL/GenBank/DDBJ databases">
        <title>Cloning and characterization of a novel gene from rat brain.</title>
        <authorList>
            <person name="Sharma K.D."/>
            <person name="Schmidt H."/>
            <person name="Rathjen F.G."/>
        </authorList>
    </citation>
    <scope>NUCLEOTIDE SEQUENCE [MRNA]</scope>
    <source>
        <tissue>Brain</tissue>
    </source>
</reference>
<reference key="2">
    <citation type="journal article" date="2012" name="Nat. Commun.">
        <title>Quantitative maps of protein phosphorylation sites across 14 different rat organs and tissues.</title>
        <authorList>
            <person name="Lundby A."/>
            <person name="Secher A."/>
            <person name="Lage K."/>
            <person name="Nordsborg N.B."/>
            <person name="Dmytriyev A."/>
            <person name="Lundby C."/>
            <person name="Olsen J.V."/>
        </authorList>
    </citation>
    <scope>PHOSPHORYLATION [LARGE SCALE ANALYSIS] AT SER-131 AND SER-244</scope>
    <scope>IDENTIFICATION BY MASS SPECTROMETRY [LARGE SCALE ANALYSIS]</scope>
</reference>
<gene>
    <name type="primary">Sh3bp4</name>
</gene>
<accession>Q9JJS5</accession>
<evidence type="ECO:0000250" key="1"/>
<evidence type="ECO:0000250" key="2">
    <source>
        <dbReference type="UniProtKB" id="Q921I6"/>
    </source>
</evidence>
<evidence type="ECO:0000250" key="3">
    <source>
        <dbReference type="UniProtKB" id="Q9P0V3"/>
    </source>
</evidence>
<evidence type="ECO:0000255" key="4">
    <source>
        <dbReference type="PROSITE-ProRule" id="PRU00192"/>
    </source>
</evidence>
<evidence type="ECO:0000255" key="5">
    <source>
        <dbReference type="PROSITE-ProRule" id="PRU00485"/>
    </source>
</evidence>
<evidence type="ECO:0007744" key="6">
    <source>
    </source>
</evidence>
<feature type="chain" id="PRO_0000274576" description="SH3 domain-binding protein 4">
    <location>
        <begin position="1"/>
        <end position="961"/>
    </location>
</feature>
<feature type="domain" description="SH3 1" evidence="4">
    <location>
        <begin position="55"/>
        <end position="114"/>
    </location>
</feature>
<feature type="domain" description="ZU5" evidence="5">
    <location>
        <begin position="315"/>
        <end position="452"/>
    </location>
</feature>
<feature type="domain" description="SH3 2" evidence="4">
    <location>
        <begin position="652"/>
        <end position="722"/>
    </location>
</feature>
<feature type="modified residue" description="Phosphoserine" evidence="6">
    <location>
        <position position="131"/>
    </location>
</feature>
<feature type="modified residue" description="Phosphoserine" evidence="6">
    <location>
        <position position="244"/>
    </location>
</feature>
<feature type="modified residue" description="Phosphoserine" evidence="2">
    <location>
        <position position="249"/>
    </location>
</feature>
<feature type="modified residue" description="Phosphoserine" evidence="3">
    <location>
        <position position="277"/>
    </location>
</feature>
<feature type="modified residue" description="Phosphoserine" evidence="3">
    <location>
        <position position="294"/>
    </location>
</feature>
<feature type="modified residue" description="Phosphoserine" evidence="3">
    <location>
        <position position="635"/>
    </location>
</feature>
<dbReference type="EMBL" id="AJ278266">
    <property type="protein sequence ID" value="CAB93353.2"/>
    <property type="molecule type" value="mRNA"/>
</dbReference>
<dbReference type="SMR" id="Q9JJS5"/>
<dbReference type="FunCoup" id="Q9JJS5">
    <property type="interactions" value="1325"/>
</dbReference>
<dbReference type="STRING" id="10116.ENSRNOP00000026312"/>
<dbReference type="GlyGen" id="Q9JJS5">
    <property type="glycosylation" value="1 site"/>
</dbReference>
<dbReference type="iPTMnet" id="Q9JJS5"/>
<dbReference type="PhosphoSitePlus" id="Q9JJS5"/>
<dbReference type="PaxDb" id="10116-ENSRNOP00000026312"/>
<dbReference type="UCSC" id="RGD:620219">
    <property type="organism name" value="rat"/>
</dbReference>
<dbReference type="AGR" id="RGD:620219"/>
<dbReference type="RGD" id="620219">
    <property type="gene designation" value="Sh3bp4"/>
</dbReference>
<dbReference type="eggNOG" id="ENOG502QTUW">
    <property type="taxonomic scope" value="Eukaryota"/>
</dbReference>
<dbReference type="InParanoid" id="Q9JJS5"/>
<dbReference type="PhylomeDB" id="Q9JJS5"/>
<dbReference type="Reactome" id="R-RNO-9639288">
    <property type="pathway name" value="Amino acids regulate mTORC1"/>
</dbReference>
<dbReference type="PRO" id="PR:Q9JJS5"/>
<dbReference type="Proteomes" id="UP000002494">
    <property type="component" value="Unplaced"/>
</dbReference>
<dbReference type="GO" id="GO:0005905">
    <property type="term" value="C:clathrin-coated pit"/>
    <property type="evidence" value="ECO:0007669"/>
    <property type="project" value="UniProtKB-SubCell"/>
</dbReference>
<dbReference type="GO" id="GO:0030136">
    <property type="term" value="C:clathrin-coated vesicle"/>
    <property type="evidence" value="ECO:0007669"/>
    <property type="project" value="UniProtKB-SubCell"/>
</dbReference>
<dbReference type="GO" id="GO:0005737">
    <property type="term" value="C:cytoplasm"/>
    <property type="evidence" value="ECO:0000250"/>
    <property type="project" value="UniProtKB"/>
</dbReference>
<dbReference type="GO" id="GO:0005634">
    <property type="term" value="C:nucleus"/>
    <property type="evidence" value="ECO:0007669"/>
    <property type="project" value="UniProtKB-SubCell"/>
</dbReference>
<dbReference type="GO" id="GO:0005092">
    <property type="term" value="F:GDP-dissociation inhibitor activity"/>
    <property type="evidence" value="ECO:0000250"/>
    <property type="project" value="UniProtKB"/>
</dbReference>
<dbReference type="GO" id="GO:0042802">
    <property type="term" value="F:identical protein binding"/>
    <property type="evidence" value="ECO:0000266"/>
    <property type="project" value="RGD"/>
</dbReference>
<dbReference type="GO" id="GO:0031267">
    <property type="term" value="F:small GTPase binding"/>
    <property type="evidence" value="ECO:0000266"/>
    <property type="project" value="RGD"/>
</dbReference>
<dbReference type="GO" id="GO:0071230">
    <property type="term" value="P:cellular response to amino acid stimulus"/>
    <property type="evidence" value="ECO:0000250"/>
    <property type="project" value="UniProtKB"/>
</dbReference>
<dbReference type="GO" id="GO:0006897">
    <property type="term" value="P:endocytosis"/>
    <property type="evidence" value="ECO:0007669"/>
    <property type="project" value="UniProtKB-KW"/>
</dbReference>
<dbReference type="GO" id="GO:0030308">
    <property type="term" value="P:negative regulation of cell growth"/>
    <property type="evidence" value="ECO:0000250"/>
    <property type="project" value="UniProtKB"/>
</dbReference>
<dbReference type="GO" id="GO:0008285">
    <property type="term" value="P:negative regulation of cell population proliferation"/>
    <property type="evidence" value="ECO:0000250"/>
    <property type="project" value="UniProtKB"/>
</dbReference>
<dbReference type="GO" id="GO:0034260">
    <property type="term" value="P:negative regulation of GTPase activity"/>
    <property type="evidence" value="ECO:0000250"/>
    <property type="project" value="UniProtKB"/>
</dbReference>
<dbReference type="GO" id="GO:0032007">
    <property type="term" value="P:negative regulation of TOR signaling"/>
    <property type="evidence" value="ECO:0000250"/>
    <property type="project" value="UniProtKB"/>
</dbReference>
<dbReference type="GO" id="GO:0010508">
    <property type="term" value="P:positive regulation of autophagy"/>
    <property type="evidence" value="ECO:0000250"/>
    <property type="project" value="UniProtKB"/>
</dbReference>
<dbReference type="GO" id="GO:0061462">
    <property type="term" value="P:protein localization to lysosome"/>
    <property type="evidence" value="ECO:0000250"/>
    <property type="project" value="UniProtKB"/>
</dbReference>
<dbReference type="GO" id="GO:0050790">
    <property type="term" value="P:regulation of catalytic activity"/>
    <property type="evidence" value="ECO:0000250"/>
    <property type="project" value="UniProtKB"/>
</dbReference>
<dbReference type="CDD" id="cd11757">
    <property type="entry name" value="SH3_SH3BP4"/>
    <property type="match status" value="1"/>
</dbReference>
<dbReference type="FunFam" id="2.30.30.40:FF:000117">
    <property type="entry name" value="SH3 domain-binding protein 4"/>
    <property type="match status" value="1"/>
</dbReference>
<dbReference type="FunFam" id="2.60.220.30:FF:000008">
    <property type="entry name" value="SH3 domain-binding protein 4"/>
    <property type="match status" value="1"/>
</dbReference>
<dbReference type="Gene3D" id="2.60.220.30">
    <property type="match status" value="1"/>
</dbReference>
<dbReference type="Gene3D" id="2.30.30.40">
    <property type="entry name" value="SH3 Domains"/>
    <property type="match status" value="1"/>
</dbReference>
<dbReference type="InterPro" id="IPR056183">
    <property type="entry name" value="DEATH_SH3BP4"/>
</dbReference>
<dbReference type="InterPro" id="IPR036028">
    <property type="entry name" value="SH3-like_dom_sf"/>
</dbReference>
<dbReference type="InterPro" id="IPR001452">
    <property type="entry name" value="SH3_domain"/>
</dbReference>
<dbReference type="InterPro" id="IPR056181">
    <property type="entry name" value="SH3BP4_C"/>
</dbReference>
<dbReference type="InterPro" id="IPR035456">
    <property type="entry name" value="SH3BP4_SH3"/>
</dbReference>
<dbReference type="InterPro" id="IPR056182">
    <property type="entry name" value="UPA_SH3BP4"/>
</dbReference>
<dbReference type="InterPro" id="IPR000906">
    <property type="entry name" value="ZU5_dom"/>
</dbReference>
<dbReference type="PANTHER" id="PTHR15603:SF3">
    <property type="entry name" value="SH3 DOMAIN-BINDING PROTEIN 4"/>
    <property type="match status" value="1"/>
</dbReference>
<dbReference type="PANTHER" id="PTHR15603">
    <property type="entry name" value="SH3 DOMAIN-CONTAINING PROTEIN"/>
    <property type="match status" value="1"/>
</dbReference>
<dbReference type="Pfam" id="PF24094">
    <property type="entry name" value="DEATH_SH3BP4"/>
    <property type="match status" value="1"/>
</dbReference>
<dbReference type="Pfam" id="PF00018">
    <property type="entry name" value="SH3_1"/>
    <property type="match status" value="1"/>
</dbReference>
<dbReference type="Pfam" id="PF07653">
    <property type="entry name" value="SH3_2"/>
    <property type="match status" value="1"/>
</dbReference>
<dbReference type="Pfam" id="PF23637">
    <property type="entry name" value="SH3BP4_C"/>
    <property type="match status" value="1"/>
</dbReference>
<dbReference type="Pfam" id="PF23640">
    <property type="entry name" value="UPA_SH3BP4"/>
    <property type="match status" value="1"/>
</dbReference>
<dbReference type="Pfam" id="PF00791">
    <property type="entry name" value="ZU5"/>
    <property type="match status" value="1"/>
</dbReference>
<dbReference type="SMART" id="SM00326">
    <property type="entry name" value="SH3"/>
    <property type="match status" value="1"/>
</dbReference>
<dbReference type="SUPFAM" id="SSF50044">
    <property type="entry name" value="SH3-domain"/>
    <property type="match status" value="1"/>
</dbReference>
<dbReference type="PROSITE" id="PS50002">
    <property type="entry name" value="SH3"/>
    <property type="match status" value="2"/>
</dbReference>
<dbReference type="PROSITE" id="PS51145">
    <property type="entry name" value="ZU5"/>
    <property type="match status" value="1"/>
</dbReference>
<sequence>MAAQRIRAANSSGLPRCKSEGTLIDLSEGFSETSFNDVKVPSPSALLVDNPTPFGNAKEVIAIKDYCPNNFTTLKFSKGDHLYVLDTSGGEWWYAHNTTEMGYIPSSYVQPLNYRNSTLSDSGMIDNLPDSPDEVAKELDLLGGWTDDQKQSGRPYSNNPFWNGVRTNPFLNGNAQPSMDELNPKSTVDLLLFDTGTSSFTESSSATTNSTGNIFDELPATNGIHLEQPVKRDNPFFRSKRSYSLSELSVLQAKSDAPPTSSFFTGLKSPAPEQFQSREDFRTAWLNHRKLARSCHDLDLLGQSPGWGQTQAVETNIVCKLDSSGGSVQLPDTSISIHVPEGHVAPGETQQISMKALLDPPLDLNSDRSTSISPVVEVKLSNLEVSTFIILEMKVSAEVKGDIFSKSTVVLQCLRSDSKEGPYAPIPLAYSYGDTIQVQLDNLEPCMYLAIVAQGSNILYPSTVWDFIHKRVTVGLYGPKHIHPSFKTVVTIFGHDCAPKTLLVTEVTRQAPSPAPVALQLWGKHQFILSRPQDLRVCMFSNMTNYDVKSNEQAKVVRGFQMKLGKVSRLIFSVISQNPNELSDFTLRVQVKDDQDTILTQFCVQTPQPPPKSAIKPSGQRRFLKKNEVGKIILSPFVVTTKYPTFQDRPVSSLKFGKLLKTVVRQNKSHYLLEYKKGDVVALLSEERIRLKGQLWTKEWYIGYYQGKVGLVHTKNVLVVGKARPSLFSGPELSTSVLLEQILRPCKFLTYIYASVRTLLMENISSWRAFADALGYGNLPLTFFCRAELDSEPERVASVLEKLKEDCNNPDNKDRKSFQKELVMALLKMDCQGLVVRLIQDFVLLTTAVEVAQRWRELAEKLAKVSKQQMDAYESPHRDRNGVVDSEAMWKPAYDFLLTWSHQIGDSYRDVIQELHIGLDKMKNPITRRWKHLTGTLILVNSLDILRAAAFSPADHDDFVI</sequence>